<feature type="chain" id="PRO_0000365542" description="Costars family protein v1g158749">
    <location>
        <begin position="1"/>
        <end position="82"/>
    </location>
</feature>
<keyword id="KW-1185">Reference proteome</keyword>
<name>COSA_NEMVE</name>
<gene>
    <name type="ORF">v1g158749</name>
</gene>
<sequence>MNVEHEVKLLVEELKRLGQPNSDDKIVVKFGVLFNDDRCANIFEALVGTLKAAKRKKIVHYDSELLLQGVHDHVDIVLLKDE</sequence>
<reference key="1">
    <citation type="journal article" date="2007" name="Science">
        <title>Sea anemone genome reveals ancestral eumetazoan gene repertoire and genomic organization.</title>
        <authorList>
            <person name="Putnam N.H."/>
            <person name="Srivastava M."/>
            <person name="Hellsten U."/>
            <person name="Dirks B."/>
            <person name="Chapman J."/>
            <person name="Salamov A."/>
            <person name="Terry A."/>
            <person name="Shapiro H."/>
            <person name="Lindquist E."/>
            <person name="Kapitonov V.V."/>
            <person name="Jurka J."/>
            <person name="Genikhovich G."/>
            <person name="Grigoriev I.V."/>
            <person name="Lucas S.M."/>
            <person name="Steele R.E."/>
            <person name="Finnerty J.R."/>
            <person name="Technau U."/>
            <person name="Martindale M.Q."/>
            <person name="Rokhsar D.S."/>
        </authorList>
    </citation>
    <scope>NUCLEOTIDE SEQUENCE [LARGE SCALE GENOMIC DNA]</scope>
    <source>
        <strain>CH2 X CH6</strain>
    </source>
</reference>
<dbReference type="EMBL" id="DS469511">
    <property type="protein sequence ID" value="EDO48874.1"/>
    <property type="molecule type" value="Genomic_DNA"/>
</dbReference>
<dbReference type="SMR" id="A7RHL5"/>
<dbReference type="EnsemblMetazoa" id="EDO48874">
    <property type="protein sequence ID" value="EDO48874"/>
    <property type="gene ID" value="NEMVEDRAFT_v1g158749"/>
</dbReference>
<dbReference type="KEGG" id="nve:5521137"/>
<dbReference type="eggNOG" id="KOG3376">
    <property type="taxonomic scope" value="Eukaryota"/>
</dbReference>
<dbReference type="HOGENOM" id="CLU_173478_0_0_1"/>
<dbReference type="InParanoid" id="A7RHL5"/>
<dbReference type="OMA" id="QRVHDNV"/>
<dbReference type="OrthoDB" id="9871914at2759"/>
<dbReference type="PhylomeDB" id="A7RHL5"/>
<dbReference type="Proteomes" id="UP000001593">
    <property type="component" value="Unassembled WGS sequence"/>
</dbReference>
<dbReference type="GO" id="GO:0032970">
    <property type="term" value="P:regulation of actin filament-based process"/>
    <property type="evidence" value="ECO:0000318"/>
    <property type="project" value="GO_Central"/>
</dbReference>
<dbReference type="FunFam" id="1.10.10.1540:FF:000002">
    <property type="entry name" value="costars family protein ABRACL"/>
    <property type="match status" value="1"/>
</dbReference>
<dbReference type="Gene3D" id="1.10.10.1540">
    <property type="entry name" value="Costar domain"/>
    <property type="match status" value="1"/>
</dbReference>
<dbReference type="InterPro" id="IPR044302">
    <property type="entry name" value="Costars"/>
</dbReference>
<dbReference type="InterPro" id="IPR027817">
    <property type="entry name" value="Costars_dom"/>
</dbReference>
<dbReference type="InterPro" id="IPR038095">
    <property type="entry name" value="Costars_sf"/>
</dbReference>
<dbReference type="PANTHER" id="PTHR46334">
    <property type="entry name" value="COSTARS FAMILY PROTEIN ABRACL"/>
    <property type="match status" value="1"/>
</dbReference>
<dbReference type="PANTHER" id="PTHR46334:SF1">
    <property type="entry name" value="COSTARS FAMILY PROTEIN ABRACL"/>
    <property type="match status" value="1"/>
</dbReference>
<dbReference type="Pfam" id="PF14705">
    <property type="entry name" value="Costars"/>
    <property type="match status" value="1"/>
</dbReference>
<dbReference type="SMART" id="SM01283">
    <property type="entry name" value="Costars"/>
    <property type="match status" value="1"/>
</dbReference>
<accession>A7RHL5</accession>
<protein>
    <recommendedName>
        <fullName>Costars family protein v1g158749</fullName>
    </recommendedName>
</protein>
<evidence type="ECO:0000305" key="1"/>
<comment type="similarity">
    <text evidence="1">Belongs to the costars family.</text>
</comment>
<proteinExistence type="inferred from homology"/>
<organism>
    <name type="scientific">Nematostella vectensis</name>
    <name type="common">Starlet sea anemone</name>
    <dbReference type="NCBI Taxonomy" id="45351"/>
    <lineage>
        <taxon>Eukaryota</taxon>
        <taxon>Metazoa</taxon>
        <taxon>Cnidaria</taxon>
        <taxon>Anthozoa</taxon>
        <taxon>Hexacorallia</taxon>
        <taxon>Actiniaria</taxon>
        <taxon>Edwardsiidae</taxon>
        <taxon>Nematostella</taxon>
    </lineage>
</organism>